<proteinExistence type="evidence at protein level"/>
<organism>
    <name type="scientific">Mus musculus</name>
    <name type="common">Mouse</name>
    <dbReference type="NCBI Taxonomy" id="10090"/>
    <lineage>
        <taxon>Eukaryota</taxon>
        <taxon>Metazoa</taxon>
        <taxon>Chordata</taxon>
        <taxon>Craniata</taxon>
        <taxon>Vertebrata</taxon>
        <taxon>Euteleostomi</taxon>
        <taxon>Mammalia</taxon>
        <taxon>Eutheria</taxon>
        <taxon>Euarchontoglires</taxon>
        <taxon>Glires</taxon>
        <taxon>Rodentia</taxon>
        <taxon>Myomorpha</taxon>
        <taxon>Muroidea</taxon>
        <taxon>Muridae</taxon>
        <taxon>Murinae</taxon>
        <taxon>Mus</taxon>
        <taxon>Mus</taxon>
    </lineage>
</organism>
<name>ADHX_MOUSE</name>
<comment type="function">
    <text evidence="1 2 3">Catalyzes the oxidation of long-chain primary alcohols and the oxidation of S-(hydroxymethyl) glutathione (By similarity). Also oxidizes long chain omega-hydroxy fatty acids, such as 20-HETE, producing both the intermediate aldehyde, 20-oxoarachidonate and the end product, a dicarboxylic acid, (5Z,8Z,11Z,14Z)-eicosatetraenedioate (By similarity). Class-III ADH is remarkably ineffective in oxidizing ethanol (By similarity). Required for clearance of cellular formaldehyde, a cytotoxic and carcinogenic metabolite that induces DNA damage (By similarity). Also acts as a S-nitroso-glutathione reductase by catalyzing the NADH-dependent reduction of S-nitrosoglutathione, thereby regulating protein S-nitrosylation (PubMed:11260719, PubMed:14980227).</text>
</comment>
<comment type="catalytic activity">
    <reaction evidence="1">
        <text>a primary alcohol + NAD(+) = an aldehyde + NADH + H(+)</text>
        <dbReference type="Rhea" id="RHEA:10736"/>
        <dbReference type="ChEBI" id="CHEBI:15378"/>
        <dbReference type="ChEBI" id="CHEBI:15734"/>
        <dbReference type="ChEBI" id="CHEBI:17478"/>
        <dbReference type="ChEBI" id="CHEBI:57540"/>
        <dbReference type="ChEBI" id="CHEBI:57945"/>
        <dbReference type="EC" id="1.1.1.1"/>
    </reaction>
</comment>
<comment type="catalytic activity">
    <reaction evidence="1">
        <text>a secondary alcohol + NAD(+) = a ketone + NADH + H(+)</text>
        <dbReference type="Rhea" id="RHEA:10740"/>
        <dbReference type="ChEBI" id="CHEBI:15378"/>
        <dbReference type="ChEBI" id="CHEBI:17087"/>
        <dbReference type="ChEBI" id="CHEBI:35681"/>
        <dbReference type="ChEBI" id="CHEBI:57540"/>
        <dbReference type="ChEBI" id="CHEBI:57945"/>
        <dbReference type="EC" id="1.1.1.1"/>
    </reaction>
</comment>
<comment type="catalytic activity">
    <reaction evidence="1">
        <text>S-(hydroxymethyl)glutathione + NADP(+) = S-formylglutathione + NADPH + H(+)</text>
        <dbReference type="Rhea" id="RHEA:19981"/>
        <dbReference type="ChEBI" id="CHEBI:15378"/>
        <dbReference type="ChEBI" id="CHEBI:57688"/>
        <dbReference type="ChEBI" id="CHEBI:57783"/>
        <dbReference type="ChEBI" id="CHEBI:58349"/>
        <dbReference type="ChEBI" id="CHEBI:58758"/>
        <dbReference type="EC" id="1.1.1.284"/>
    </reaction>
</comment>
<comment type="catalytic activity">
    <reaction evidence="1">
        <text>S-(hydroxymethyl)glutathione + NAD(+) = S-formylglutathione + NADH + H(+)</text>
        <dbReference type="Rhea" id="RHEA:19985"/>
        <dbReference type="ChEBI" id="CHEBI:15378"/>
        <dbReference type="ChEBI" id="CHEBI:57540"/>
        <dbReference type="ChEBI" id="CHEBI:57688"/>
        <dbReference type="ChEBI" id="CHEBI:57945"/>
        <dbReference type="ChEBI" id="CHEBI:58758"/>
        <dbReference type="EC" id="1.1.1.284"/>
    </reaction>
</comment>
<comment type="catalytic activity">
    <reaction evidence="1">
        <text>20-oxo-(5Z,8Z,11Z,14Z)-eicosatetraenoate + NAD(+) + H2O = (5Z,8Z,11Z,14Z)-eicosatetraenedioate + NADH + 2 H(+)</text>
        <dbReference type="Rhea" id="RHEA:39803"/>
        <dbReference type="ChEBI" id="CHEBI:15377"/>
        <dbReference type="ChEBI" id="CHEBI:15378"/>
        <dbReference type="ChEBI" id="CHEBI:57540"/>
        <dbReference type="ChEBI" id="CHEBI:57945"/>
        <dbReference type="ChEBI" id="CHEBI:76645"/>
        <dbReference type="ChEBI" id="CHEBI:76647"/>
    </reaction>
    <physiologicalReaction direction="left-to-right" evidence="1">
        <dbReference type="Rhea" id="RHEA:39804"/>
    </physiologicalReaction>
</comment>
<comment type="catalytic activity">
    <reaction evidence="1">
        <text>20-hydroxy-(5Z,8Z,11Z,14Z)-eicosatetraenoate + NAD(+) = 20-oxo-(5Z,8Z,11Z,14Z)-eicosatetraenoate + NADH + H(+)</text>
        <dbReference type="Rhea" id="RHEA:39799"/>
        <dbReference type="ChEBI" id="CHEBI:15378"/>
        <dbReference type="ChEBI" id="CHEBI:57540"/>
        <dbReference type="ChEBI" id="CHEBI:57945"/>
        <dbReference type="ChEBI" id="CHEBI:76624"/>
        <dbReference type="ChEBI" id="CHEBI:76645"/>
    </reaction>
    <physiologicalReaction direction="left-to-right" evidence="1">
        <dbReference type="Rhea" id="RHEA:39800"/>
    </physiologicalReaction>
</comment>
<comment type="catalytic activity">
    <reaction evidence="2 3">
        <text>S-nitrosoglutathione + NADH + H(+) = S-(hydroxysulfenamide)glutathione + NAD(+)</text>
        <dbReference type="Rhea" id="RHEA:78371"/>
        <dbReference type="ChEBI" id="CHEBI:15378"/>
        <dbReference type="ChEBI" id="CHEBI:57540"/>
        <dbReference type="ChEBI" id="CHEBI:57945"/>
        <dbReference type="ChEBI" id="CHEBI:145544"/>
        <dbReference type="ChEBI" id="CHEBI:229723"/>
    </reaction>
    <physiologicalReaction direction="left-to-right" evidence="2 3">
        <dbReference type="Rhea" id="RHEA:78372"/>
    </physiologicalReaction>
</comment>
<comment type="cofactor">
    <cofactor evidence="1">
        <name>Zn(2+)</name>
        <dbReference type="ChEBI" id="CHEBI:29105"/>
    </cofactor>
    <text evidence="1">Binds 2 Zn(2+) ions per subunit.</text>
</comment>
<comment type="subunit">
    <text evidence="1">Homodimer.</text>
</comment>
<comment type="subcellular location">
    <subcellularLocation>
        <location evidence="5">Cytoplasm</location>
    </subcellularLocation>
</comment>
<comment type="tissue specificity">
    <text evidence="4">Ubiquitous.</text>
</comment>
<comment type="disruption phenotype">
    <text evidence="3">Mice develop normally but show a significant increase in whole-cell S-nitrosylation (PubMed:14980227). Mice display increased tissue damage and mortality following endotoxic or bacterial challenge (PubMed:14980227).</text>
</comment>
<comment type="similarity">
    <text evidence="5">Belongs to the zinc-containing alcohol dehydrogenase family. Class-III subfamily.</text>
</comment>
<accession>P28474</accession>
<accession>Q3TW83</accession>
<accession>Q8C662</accession>
<sequence length="374" mass="39548">MANQVIRCKAAVAWEAGKPLSIEEIEVAPPKAHEVRIKILATAVCHTDAYTLSGADPEGCFPVILGHEGAGIVESVGEGVTKLKAGDTVIPLYIPQCGECKFCLNPKTNLCQKIRVTQGKGLMPDGTSRFTCKGKSVFHFMGTSTFSEYTVVADISVAKIDPSAPLDKVCLLGCGISTGYGAAVNTAKVEPGSTCAVFGLGGVGLAVIMGCKVAGASRIIGIDINKDKFAKAKEFGASECISPQDFSKSIQEVLVEMTDGGVDYSFECIGNVKVMRSALEAAHKGWGVSVVVGVAASGEEISTRPFQLVTGRTWKGTAFGGWKSVESVPKLVSEYMSKKIKVDEFVTGNLSFDQINQAFDLMHSGDSIRTVLKM</sequence>
<protein>
    <recommendedName>
        <fullName evidence="5">Alcohol dehydrogenase class-3</fullName>
        <ecNumber evidence="1">1.1.1.1</ecNumber>
    </recommendedName>
    <alternativeName>
        <fullName>Alcohol dehydrogenase 2</fullName>
    </alternativeName>
    <alternativeName>
        <fullName>Alcohol dehydrogenase 5</fullName>
    </alternativeName>
    <alternativeName>
        <fullName>Alcohol dehydrogenase B2</fullName>
        <shortName>ADH-B2</shortName>
    </alternativeName>
    <alternativeName>
        <fullName>Alcohol dehydrogenase class-III</fullName>
    </alternativeName>
    <alternativeName>
        <fullName>Glutathione-dependent formaldehyde dehydrogenase</fullName>
        <shortName>FALDH</shortName>
        <shortName>FDH</shortName>
        <shortName>GSH-FDH</shortName>
        <ecNumber>1.1.1.-</ecNumber>
    </alternativeName>
    <alternativeName>
        <fullName>S-(hydroxymethyl)glutathione dehydrogenase</fullName>
        <ecNumber evidence="1">1.1.1.284</ecNumber>
    </alternativeName>
</protein>
<dbReference type="EC" id="1.1.1.1" evidence="1"/>
<dbReference type="EC" id="1.1.1.-"/>
<dbReference type="EC" id="1.1.1.284" evidence="1"/>
<dbReference type="EMBL" id="M84147">
    <property type="protein sequence ID" value="AAA68896.1"/>
    <property type="molecule type" value="mRNA"/>
</dbReference>
<dbReference type="EMBL" id="U48970">
    <property type="protein sequence ID" value="AAC52763.1"/>
    <property type="molecule type" value="Genomic_DNA"/>
</dbReference>
<dbReference type="EMBL" id="U48964">
    <property type="protein sequence ID" value="AAC52763.1"/>
    <property type="status" value="JOINED"/>
    <property type="molecule type" value="Genomic_DNA"/>
</dbReference>
<dbReference type="EMBL" id="U48965">
    <property type="protein sequence ID" value="AAC52763.1"/>
    <property type="status" value="JOINED"/>
    <property type="molecule type" value="Genomic_DNA"/>
</dbReference>
<dbReference type="EMBL" id="U48966">
    <property type="protein sequence ID" value="AAC52763.1"/>
    <property type="status" value="JOINED"/>
    <property type="molecule type" value="Genomic_DNA"/>
</dbReference>
<dbReference type="EMBL" id="U48968">
    <property type="protein sequence ID" value="AAC52763.1"/>
    <property type="status" value="JOINED"/>
    <property type="molecule type" value="Genomic_DNA"/>
</dbReference>
<dbReference type="EMBL" id="U48969">
    <property type="protein sequence ID" value="AAC52763.1"/>
    <property type="status" value="JOINED"/>
    <property type="molecule type" value="Genomic_DNA"/>
</dbReference>
<dbReference type="EMBL" id="AK076507">
    <property type="protein sequence ID" value="BAC36370.1"/>
    <property type="molecule type" value="mRNA"/>
</dbReference>
<dbReference type="EMBL" id="AK146949">
    <property type="protein sequence ID" value="BAE27558.1"/>
    <property type="molecule type" value="mRNA"/>
</dbReference>
<dbReference type="EMBL" id="AK159803">
    <property type="protein sequence ID" value="BAE35383.1"/>
    <property type="molecule type" value="mRNA"/>
</dbReference>
<dbReference type="EMBL" id="BC090978">
    <property type="protein sequence ID" value="AAH90978.1"/>
    <property type="molecule type" value="mRNA"/>
</dbReference>
<dbReference type="CCDS" id="CCDS17868.1"/>
<dbReference type="PIR" id="A56643">
    <property type="entry name" value="A56643"/>
</dbReference>
<dbReference type="RefSeq" id="NP_001275507.1">
    <property type="nucleotide sequence ID" value="NM_001288578.1"/>
</dbReference>
<dbReference type="RefSeq" id="NP_031436.2">
    <property type="nucleotide sequence ID" value="NM_007410.3"/>
</dbReference>
<dbReference type="SMR" id="P28474"/>
<dbReference type="BioGRID" id="197986">
    <property type="interactions" value="5"/>
</dbReference>
<dbReference type="FunCoup" id="P28474">
    <property type="interactions" value="3459"/>
</dbReference>
<dbReference type="STRING" id="10090.ENSMUSP00000005964"/>
<dbReference type="BindingDB" id="P28474"/>
<dbReference type="ChEMBL" id="CHEMBL3341"/>
<dbReference type="GlyGen" id="P28474">
    <property type="glycosylation" value="1 site, 1 O-linked glycan (1 site)"/>
</dbReference>
<dbReference type="iPTMnet" id="P28474"/>
<dbReference type="MetOSite" id="P28474"/>
<dbReference type="PhosphoSitePlus" id="P28474"/>
<dbReference type="SwissPalm" id="P28474"/>
<dbReference type="REPRODUCTION-2DPAGE" id="P28474"/>
<dbReference type="jPOST" id="P28474"/>
<dbReference type="PaxDb" id="10090-ENSMUSP00000005964"/>
<dbReference type="PeptideAtlas" id="P28474"/>
<dbReference type="ProteomicsDB" id="296110"/>
<dbReference type="Pumba" id="P28474"/>
<dbReference type="Antibodypedia" id="25845">
    <property type="antibodies" value="445 antibodies from 36 providers"/>
</dbReference>
<dbReference type="DNASU" id="11532"/>
<dbReference type="Ensembl" id="ENSMUST00000005964.7">
    <property type="protein sequence ID" value="ENSMUSP00000005964.3"/>
    <property type="gene ID" value="ENSMUSG00000028138.9"/>
</dbReference>
<dbReference type="GeneID" id="11532"/>
<dbReference type="KEGG" id="mmu:11532"/>
<dbReference type="UCSC" id="uc008rnk.2">
    <property type="organism name" value="mouse"/>
</dbReference>
<dbReference type="AGR" id="MGI:87929"/>
<dbReference type="CTD" id="128"/>
<dbReference type="MGI" id="MGI:87929">
    <property type="gene designation" value="Adh5"/>
</dbReference>
<dbReference type="VEuPathDB" id="HostDB:ENSMUSG00000028138"/>
<dbReference type="eggNOG" id="KOG0022">
    <property type="taxonomic scope" value="Eukaryota"/>
</dbReference>
<dbReference type="GeneTree" id="ENSGT00940000155196"/>
<dbReference type="HOGENOM" id="CLU_026673_14_0_1"/>
<dbReference type="InParanoid" id="P28474"/>
<dbReference type="OMA" id="IKGRSEM"/>
<dbReference type="OrthoDB" id="417550at2759"/>
<dbReference type="PhylomeDB" id="P28474"/>
<dbReference type="TreeFam" id="TF300429"/>
<dbReference type="Reactome" id="R-MMU-71384">
    <property type="pathway name" value="Ethanol oxidation"/>
</dbReference>
<dbReference type="BioGRID-ORCS" id="11532">
    <property type="hits" value="2 hits in 81 CRISPR screens"/>
</dbReference>
<dbReference type="ChiTaRS" id="Adh5">
    <property type="organism name" value="mouse"/>
</dbReference>
<dbReference type="PRO" id="PR:P28474"/>
<dbReference type="Proteomes" id="UP000000589">
    <property type="component" value="Chromosome 3"/>
</dbReference>
<dbReference type="RNAct" id="P28474">
    <property type="molecule type" value="protein"/>
</dbReference>
<dbReference type="Bgee" id="ENSMUSG00000028138">
    <property type="expression patterns" value="Expressed in floor plate of midbrain and 279 other cell types or tissues"/>
</dbReference>
<dbReference type="ExpressionAtlas" id="P28474">
    <property type="expression patterns" value="baseline and differential"/>
</dbReference>
<dbReference type="GO" id="GO:0005739">
    <property type="term" value="C:mitochondrion"/>
    <property type="evidence" value="ECO:0000314"/>
    <property type="project" value="MGI"/>
</dbReference>
<dbReference type="GO" id="GO:0004022">
    <property type="term" value="F:alcohol dehydrogenase (NAD+) activity"/>
    <property type="evidence" value="ECO:0000314"/>
    <property type="project" value="MGI"/>
</dbReference>
<dbReference type="GO" id="GO:0005504">
    <property type="term" value="F:fatty acid binding"/>
    <property type="evidence" value="ECO:0007669"/>
    <property type="project" value="Ensembl"/>
</dbReference>
<dbReference type="GO" id="GO:0018467">
    <property type="term" value="F:formaldehyde dehydrogenase (NAD+) activity"/>
    <property type="evidence" value="ECO:0007669"/>
    <property type="project" value="Ensembl"/>
</dbReference>
<dbReference type="GO" id="GO:0042802">
    <property type="term" value="F:identical protein binding"/>
    <property type="evidence" value="ECO:0000353"/>
    <property type="project" value="MGI"/>
</dbReference>
<dbReference type="GO" id="GO:0106322">
    <property type="term" value="F:S-(hydroxymethyl)glutathione dehydrogenase (NAD+) activity"/>
    <property type="evidence" value="ECO:0007669"/>
    <property type="project" value="RHEA"/>
</dbReference>
<dbReference type="GO" id="GO:0106321">
    <property type="term" value="F:S-(hydroxymethyl)glutathione dehydrogenase (NADP+) activity"/>
    <property type="evidence" value="ECO:0007669"/>
    <property type="project" value="RHEA"/>
</dbReference>
<dbReference type="GO" id="GO:0051903">
    <property type="term" value="F:S-(hydroxymethyl)glutathione dehydrogenase [NAD(P)+] activity"/>
    <property type="evidence" value="ECO:0000315"/>
    <property type="project" value="MGI"/>
</dbReference>
<dbReference type="GO" id="GO:0080007">
    <property type="term" value="F:S-nitrosoglutathione reductase (NADH) activity"/>
    <property type="evidence" value="ECO:0007669"/>
    <property type="project" value="RHEA"/>
</dbReference>
<dbReference type="GO" id="GO:0008270">
    <property type="term" value="F:zinc ion binding"/>
    <property type="evidence" value="ECO:0007669"/>
    <property type="project" value="Ensembl"/>
</dbReference>
<dbReference type="GO" id="GO:0010430">
    <property type="term" value="P:fatty acid omega-oxidation"/>
    <property type="evidence" value="ECO:0000250"/>
    <property type="project" value="UniProtKB"/>
</dbReference>
<dbReference type="GO" id="GO:0046294">
    <property type="term" value="P:formaldehyde catabolic process"/>
    <property type="evidence" value="ECO:0000315"/>
    <property type="project" value="MGI"/>
</dbReference>
<dbReference type="GO" id="GO:0045777">
    <property type="term" value="P:positive regulation of blood pressure"/>
    <property type="evidence" value="ECO:0000315"/>
    <property type="project" value="MGI"/>
</dbReference>
<dbReference type="GO" id="GO:0003016">
    <property type="term" value="P:respiratory system process"/>
    <property type="evidence" value="ECO:0000315"/>
    <property type="project" value="MGI"/>
</dbReference>
<dbReference type="GO" id="GO:0032496">
    <property type="term" value="P:response to lipopolysaccharide"/>
    <property type="evidence" value="ECO:0000315"/>
    <property type="project" value="MGI"/>
</dbReference>
<dbReference type="GO" id="GO:0051409">
    <property type="term" value="P:response to nitrosative stress"/>
    <property type="evidence" value="ECO:0000315"/>
    <property type="project" value="MGI"/>
</dbReference>
<dbReference type="GO" id="GO:0051775">
    <property type="term" value="P:response to redox state"/>
    <property type="evidence" value="ECO:0007669"/>
    <property type="project" value="Ensembl"/>
</dbReference>
<dbReference type="GO" id="GO:0001523">
    <property type="term" value="P:retinoid metabolic process"/>
    <property type="evidence" value="ECO:0000315"/>
    <property type="project" value="MGI"/>
</dbReference>
<dbReference type="CDD" id="cd08300">
    <property type="entry name" value="alcohol_DH_class_III"/>
    <property type="match status" value="1"/>
</dbReference>
<dbReference type="FunFam" id="3.40.50.720:FF:000003">
    <property type="entry name" value="S-(hydroxymethyl)glutathione dehydrogenase"/>
    <property type="match status" value="1"/>
</dbReference>
<dbReference type="FunFam" id="3.90.180.10:FF:000001">
    <property type="entry name" value="S-(hydroxymethyl)glutathione dehydrogenase"/>
    <property type="match status" value="1"/>
</dbReference>
<dbReference type="Gene3D" id="3.90.180.10">
    <property type="entry name" value="Medium-chain alcohol dehydrogenases, catalytic domain"/>
    <property type="match status" value="1"/>
</dbReference>
<dbReference type="Gene3D" id="3.40.50.720">
    <property type="entry name" value="NAD(P)-binding Rossmann-like Domain"/>
    <property type="match status" value="1"/>
</dbReference>
<dbReference type="InterPro" id="IPR013149">
    <property type="entry name" value="ADH-like_C"/>
</dbReference>
<dbReference type="InterPro" id="IPR013154">
    <property type="entry name" value="ADH-like_N"/>
</dbReference>
<dbReference type="InterPro" id="IPR014183">
    <property type="entry name" value="ADH_3"/>
</dbReference>
<dbReference type="InterPro" id="IPR002328">
    <property type="entry name" value="ADH_Zn_CS"/>
</dbReference>
<dbReference type="InterPro" id="IPR011032">
    <property type="entry name" value="GroES-like_sf"/>
</dbReference>
<dbReference type="InterPro" id="IPR036291">
    <property type="entry name" value="NAD(P)-bd_dom_sf"/>
</dbReference>
<dbReference type="NCBIfam" id="TIGR02818">
    <property type="entry name" value="adh_III_F_hyde"/>
    <property type="match status" value="1"/>
</dbReference>
<dbReference type="PANTHER" id="PTHR43880">
    <property type="entry name" value="ALCOHOL DEHYDROGENASE"/>
    <property type="match status" value="1"/>
</dbReference>
<dbReference type="PANTHER" id="PTHR43880:SF4">
    <property type="entry name" value="ALCOHOL DEHYDROGENASE CLASS-3"/>
    <property type="match status" value="1"/>
</dbReference>
<dbReference type="Pfam" id="PF08240">
    <property type="entry name" value="ADH_N"/>
    <property type="match status" value="1"/>
</dbReference>
<dbReference type="Pfam" id="PF00107">
    <property type="entry name" value="ADH_zinc_N"/>
    <property type="match status" value="1"/>
</dbReference>
<dbReference type="SUPFAM" id="SSF50129">
    <property type="entry name" value="GroES-like"/>
    <property type="match status" value="2"/>
</dbReference>
<dbReference type="SUPFAM" id="SSF51735">
    <property type="entry name" value="NAD(P)-binding Rossmann-fold domains"/>
    <property type="match status" value="1"/>
</dbReference>
<dbReference type="PROSITE" id="PS00059">
    <property type="entry name" value="ADH_ZINC"/>
    <property type="match status" value="1"/>
</dbReference>
<keyword id="KW-0007">Acetylation</keyword>
<keyword id="KW-0963">Cytoplasm</keyword>
<keyword id="KW-0903">Direct protein sequencing</keyword>
<keyword id="KW-0443">Lipid metabolism</keyword>
<keyword id="KW-0479">Metal-binding</keyword>
<keyword id="KW-0520">NAD</keyword>
<keyword id="KW-0560">Oxidoreductase</keyword>
<keyword id="KW-0597">Phosphoprotein</keyword>
<keyword id="KW-1185">Reference proteome</keyword>
<keyword id="KW-0862">Zinc</keyword>
<reference key="1">
    <citation type="journal article" date="1991" name="Adv. Exp. Med. Biol.">
        <title>Alcohol dehydrogenase gene expression and cloning of the mouse chi-like ADH.</title>
        <authorList>
            <person name="Edenberg H.J."/>
            <person name="Brown C.J."/>
            <person name="Carr L.G."/>
            <person name="Ho W.H."/>
            <person name="Hur M.W."/>
        </authorList>
    </citation>
    <scope>NUCLEOTIDE SEQUENCE [MRNA]</scope>
</reference>
<reference key="2">
    <citation type="journal article" date="1992" name="DNA Seq.">
        <title>Molecular cloning of mouse alcohol dehydrogenase-B2 cDNA: nucleotide sequences of the class III ADH genes evolve slowly even for silent substitutions.</title>
        <authorList>
            <person name="Hur M.W."/>
            <person name="Ho W.H."/>
            <person name="Brown C.J."/>
            <person name="Goldman D."/>
            <person name="Edenberg H.J."/>
        </authorList>
    </citation>
    <scope>NUCLEOTIDE SEQUENCE [MRNA]</scope>
</reference>
<reference key="3">
    <citation type="journal article" date="1996" name="Eur. J. Biochem.">
        <title>Characterization of the functional gene encoding mouse class III alcohol dehydrogenase (glutathione-dependent formaldehyde dehydrogenase) and an unexpressed processed pseudogene with an intact open reading frame.</title>
        <authorList>
            <person name="Foglio M.H."/>
            <person name="Duester G."/>
        </authorList>
    </citation>
    <scope>NUCLEOTIDE SEQUENCE [GENOMIC DNA]</scope>
    <source>
        <strain>129/SvJ</strain>
    </source>
</reference>
<reference key="4">
    <citation type="journal article" date="2005" name="Science">
        <title>The transcriptional landscape of the mammalian genome.</title>
        <authorList>
            <person name="Carninci P."/>
            <person name="Kasukawa T."/>
            <person name="Katayama S."/>
            <person name="Gough J."/>
            <person name="Frith M.C."/>
            <person name="Maeda N."/>
            <person name="Oyama R."/>
            <person name="Ravasi T."/>
            <person name="Lenhard B."/>
            <person name="Wells C."/>
            <person name="Kodzius R."/>
            <person name="Shimokawa K."/>
            <person name="Bajic V.B."/>
            <person name="Brenner S.E."/>
            <person name="Batalov S."/>
            <person name="Forrest A.R."/>
            <person name="Zavolan M."/>
            <person name="Davis M.J."/>
            <person name="Wilming L.G."/>
            <person name="Aidinis V."/>
            <person name="Allen J.E."/>
            <person name="Ambesi-Impiombato A."/>
            <person name="Apweiler R."/>
            <person name="Aturaliya R.N."/>
            <person name="Bailey T.L."/>
            <person name="Bansal M."/>
            <person name="Baxter L."/>
            <person name="Beisel K.W."/>
            <person name="Bersano T."/>
            <person name="Bono H."/>
            <person name="Chalk A.M."/>
            <person name="Chiu K.P."/>
            <person name="Choudhary V."/>
            <person name="Christoffels A."/>
            <person name="Clutterbuck D.R."/>
            <person name="Crowe M.L."/>
            <person name="Dalla E."/>
            <person name="Dalrymple B.P."/>
            <person name="de Bono B."/>
            <person name="Della Gatta G."/>
            <person name="di Bernardo D."/>
            <person name="Down T."/>
            <person name="Engstrom P."/>
            <person name="Fagiolini M."/>
            <person name="Faulkner G."/>
            <person name="Fletcher C.F."/>
            <person name="Fukushima T."/>
            <person name="Furuno M."/>
            <person name="Futaki S."/>
            <person name="Gariboldi M."/>
            <person name="Georgii-Hemming P."/>
            <person name="Gingeras T.R."/>
            <person name="Gojobori T."/>
            <person name="Green R.E."/>
            <person name="Gustincich S."/>
            <person name="Harbers M."/>
            <person name="Hayashi Y."/>
            <person name="Hensch T.K."/>
            <person name="Hirokawa N."/>
            <person name="Hill D."/>
            <person name="Huminiecki L."/>
            <person name="Iacono M."/>
            <person name="Ikeo K."/>
            <person name="Iwama A."/>
            <person name="Ishikawa T."/>
            <person name="Jakt M."/>
            <person name="Kanapin A."/>
            <person name="Katoh M."/>
            <person name="Kawasawa Y."/>
            <person name="Kelso J."/>
            <person name="Kitamura H."/>
            <person name="Kitano H."/>
            <person name="Kollias G."/>
            <person name="Krishnan S.P."/>
            <person name="Kruger A."/>
            <person name="Kummerfeld S.K."/>
            <person name="Kurochkin I.V."/>
            <person name="Lareau L.F."/>
            <person name="Lazarevic D."/>
            <person name="Lipovich L."/>
            <person name="Liu J."/>
            <person name="Liuni S."/>
            <person name="McWilliam S."/>
            <person name="Madan Babu M."/>
            <person name="Madera M."/>
            <person name="Marchionni L."/>
            <person name="Matsuda H."/>
            <person name="Matsuzawa S."/>
            <person name="Miki H."/>
            <person name="Mignone F."/>
            <person name="Miyake S."/>
            <person name="Morris K."/>
            <person name="Mottagui-Tabar S."/>
            <person name="Mulder N."/>
            <person name="Nakano N."/>
            <person name="Nakauchi H."/>
            <person name="Ng P."/>
            <person name="Nilsson R."/>
            <person name="Nishiguchi S."/>
            <person name="Nishikawa S."/>
            <person name="Nori F."/>
            <person name="Ohara O."/>
            <person name="Okazaki Y."/>
            <person name="Orlando V."/>
            <person name="Pang K.C."/>
            <person name="Pavan W.J."/>
            <person name="Pavesi G."/>
            <person name="Pesole G."/>
            <person name="Petrovsky N."/>
            <person name="Piazza S."/>
            <person name="Reed J."/>
            <person name="Reid J.F."/>
            <person name="Ring B.Z."/>
            <person name="Ringwald M."/>
            <person name="Rost B."/>
            <person name="Ruan Y."/>
            <person name="Salzberg S.L."/>
            <person name="Sandelin A."/>
            <person name="Schneider C."/>
            <person name="Schoenbach C."/>
            <person name="Sekiguchi K."/>
            <person name="Semple C.A."/>
            <person name="Seno S."/>
            <person name="Sessa L."/>
            <person name="Sheng Y."/>
            <person name="Shibata Y."/>
            <person name="Shimada H."/>
            <person name="Shimada K."/>
            <person name="Silva D."/>
            <person name="Sinclair B."/>
            <person name="Sperling S."/>
            <person name="Stupka E."/>
            <person name="Sugiura K."/>
            <person name="Sultana R."/>
            <person name="Takenaka Y."/>
            <person name="Taki K."/>
            <person name="Tammoja K."/>
            <person name="Tan S.L."/>
            <person name="Tang S."/>
            <person name="Taylor M.S."/>
            <person name="Tegner J."/>
            <person name="Teichmann S.A."/>
            <person name="Ueda H.R."/>
            <person name="van Nimwegen E."/>
            <person name="Verardo R."/>
            <person name="Wei C.L."/>
            <person name="Yagi K."/>
            <person name="Yamanishi H."/>
            <person name="Zabarovsky E."/>
            <person name="Zhu S."/>
            <person name="Zimmer A."/>
            <person name="Hide W."/>
            <person name="Bult C."/>
            <person name="Grimmond S.M."/>
            <person name="Teasdale R.D."/>
            <person name="Liu E.T."/>
            <person name="Brusic V."/>
            <person name="Quackenbush J."/>
            <person name="Wahlestedt C."/>
            <person name="Mattick J.S."/>
            <person name="Hume D.A."/>
            <person name="Kai C."/>
            <person name="Sasaki D."/>
            <person name="Tomaru Y."/>
            <person name="Fukuda S."/>
            <person name="Kanamori-Katayama M."/>
            <person name="Suzuki M."/>
            <person name="Aoki J."/>
            <person name="Arakawa T."/>
            <person name="Iida J."/>
            <person name="Imamura K."/>
            <person name="Itoh M."/>
            <person name="Kato T."/>
            <person name="Kawaji H."/>
            <person name="Kawagashira N."/>
            <person name="Kawashima T."/>
            <person name="Kojima M."/>
            <person name="Kondo S."/>
            <person name="Konno H."/>
            <person name="Nakano K."/>
            <person name="Ninomiya N."/>
            <person name="Nishio T."/>
            <person name="Okada M."/>
            <person name="Plessy C."/>
            <person name="Shibata K."/>
            <person name="Shiraki T."/>
            <person name="Suzuki S."/>
            <person name="Tagami M."/>
            <person name="Waki K."/>
            <person name="Watahiki A."/>
            <person name="Okamura-Oho Y."/>
            <person name="Suzuki H."/>
            <person name="Kawai J."/>
            <person name="Hayashizaki Y."/>
        </authorList>
    </citation>
    <scope>NUCLEOTIDE SEQUENCE [LARGE SCALE MRNA]</scope>
    <source>
        <strain>C57BL/6J</strain>
        <tissue>Head</tissue>
        <tissue>Kidney</tissue>
    </source>
</reference>
<reference key="5">
    <citation type="journal article" date="2004" name="Genome Res.">
        <title>The status, quality, and expansion of the NIH full-length cDNA project: the Mammalian Gene Collection (MGC).</title>
        <authorList>
            <consortium name="The MGC Project Team"/>
        </authorList>
    </citation>
    <scope>NUCLEOTIDE SEQUENCE [LARGE SCALE MRNA]</scope>
    <source>
        <tissue>Kidney</tissue>
    </source>
</reference>
<reference key="6">
    <citation type="submission" date="2009-01" db="UniProtKB">
        <authorList>
            <person name="Lubec G."/>
            <person name="Sunyer B."/>
            <person name="Chen W.-Q."/>
        </authorList>
    </citation>
    <scope>PROTEIN SEQUENCE OF 234-248</scope>
    <scope>IDENTIFICATION BY MASS SPECTROMETRY</scope>
    <source>
        <strain>OF1</strain>
        <tissue>Hippocampus</tissue>
    </source>
</reference>
<reference key="7">
    <citation type="journal article" date="1995" name="J. Biol. Chem.">
        <title>Cloning of the mouse class IV alcohol dehydrogenase (retinol dehydrogenase) cDNA and tissue-specific expression patterns of the murine ADH gene family.</title>
        <authorList>
            <person name="Zgombic-Knight M."/>
            <person name="Ang H.L."/>
            <person name="Foglio M.H."/>
            <person name="Duester G."/>
        </authorList>
    </citation>
    <scope>TISSUE SPECIFICITY</scope>
    <source>
        <strain>FVB/N</strain>
    </source>
</reference>
<reference key="8">
    <citation type="journal article" date="2001" name="Nature">
        <title>A metabolic enzyme for S-nitrosothiol conserved from bacteria to humans.</title>
        <authorList>
            <person name="Liu L."/>
            <person name="Hausladen A."/>
            <person name="Zeng M."/>
            <person name="Que L."/>
            <person name="Heitman J."/>
            <person name="Stamler J.S."/>
        </authorList>
    </citation>
    <scope>FUNCTION</scope>
    <scope>CATALYTIC ACTIVITY</scope>
    <scope>IDENTIFICATION BY MASS SPECTROMETRY</scope>
</reference>
<reference key="9">
    <citation type="journal article" date="2004" name="Cell">
        <title>Essential roles of S-nitrosothiols in vascular homeostasis and endotoxic shock.</title>
        <authorList>
            <person name="Liu L."/>
            <person name="Yan Y."/>
            <person name="Zeng M."/>
            <person name="Zhang J."/>
            <person name="Hanes M.A."/>
            <person name="Ahearn G."/>
            <person name="McMahon T.J."/>
            <person name="Dickfeld T."/>
            <person name="Marshall H.E."/>
            <person name="Que L.G."/>
            <person name="Stamler J.S."/>
        </authorList>
    </citation>
    <scope>FUNCTION</scope>
    <scope>CATALYTIC ACTIVITY</scope>
    <scope>DISRUPTION PHENOTYPE</scope>
</reference>
<reference key="10">
    <citation type="journal article" date="2007" name="Proc. Natl. Acad. Sci. U.S.A.">
        <title>Large-scale phosphorylation analysis of mouse liver.</title>
        <authorList>
            <person name="Villen J."/>
            <person name="Beausoleil S.A."/>
            <person name="Gerber S.A."/>
            <person name="Gygi S.P."/>
        </authorList>
    </citation>
    <scope>PHOSPHORYLATION [LARGE SCALE ANALYSIS] AT SER-247</scope>
    <scope>IDENTIFICATION BY MASS SPECTROMETRY [LARGE SCALE ANALYSIS]</scope>
    <source>
        <tissue>Liver</tissue>
    </source>
</reference>
<reference key="11">
    <citation type="journal article" date="2010" name="Cell">
        <title>A tissue-specific atlas of mouse protein phosphorylation and expression.</title>
        <authorList>
            <person name="Huttlin E.L."/>
            <person name="Jedrychowski M.P."/>
            <person name="Elias J.E."/>
            <person name="Goswami T."/>
            <person name="Rad R."/>
            <person name="Beausoleil S.A."/>
            <person name="Villen J."/>
            <person name="Haas W."/>
            <person name="Sowa M.E."/>
            <person name="Gygi S.P."/>
        </authorList>
    </citation>
    <scope>PHOSPHORYLATION [LARGE SCALE ANALYSIS] AT SER-247</scope>
    <scope>IDENTIFICATION BY MASS SPECTROMETRY [LARGE SCALE ANALYSIS]</scope>
    <source>
        <tissue>Brain</tissue>
        <tissue>Brown adipose tissue</tissue>
        <tissue>Heart</tissue>
        <tissue>Kidney</tissue>
        <tissue>Liver</tissue>
        <tissue>Lung</tissue>
        <tissue>Pancreas</tissue>
        <tissue>Spleen</tissue>
        <tissue>Testis</tissue>
    </source>
</reference>
<reference key="12">
    <citation type="journal article" date="2013" name="Mol. Cell">
        <title>SIRT5-mediated lysine desuccinylation impacts diverse metabolic pathways.</title>
        <authorList>
            <person name="Park J."/>
            <person name="Chen Y."/>
            <person name="Tishkoff D.X."/>
            <person name="Peng C."/>
            <person name="Tan M."/>
            <person name="Dai L."/>
            <person name="Xie Z."/>
            <person name="Zhang Y."/>
            <person name="Zwaans B.M."/>
            <person name="Skinner M.E."/>
            <person name="Lombard D.B."/>
            <person name="Zhao Y."/>
        </authorList>
    </citation>
    <scope>SUCCINYLATION [LARGE SCALE ANALYSIS] AT LYS-233 AND LYS-315</scope>
    <scope>IDENTIFICATION BY MASS SPECTROMETRY [LARGE SCALE ANALYSIS]</scope>
    <source>
        <tissue>Liver</tissue>
    </source>
</reference>
<evidence type="ECO:0000250" key="1">
    <source>
        <dbReference type="UniProtKB" id="P11766"/>
    </source>
</evidence>
<evidence type="ECO:0000269" key="2">
    <source>
    </source>
</evidence>
<evidence type="ECO:0000269" key="3">
    <source>
    </source>
</evidence>
<evidence type="ECO:0000269" key="4">
    <source>
    </source>
</evidence>
<evidence type="ECO:0000305" key="5"/>
<evidence type="ECO:0000312" key="6">
    <source>
        <dbReference type="MGI" id="MGI:87929"/>
    </source>
</evidence>
<evidence type="ECO:0007744" key="7">
    <source>
    </source>
</evidence>
<evidence type="ECO:0007744" key="8">
    <source>
    </source>
</evidence>
<evidence type="ECO:0007744" key="9">
    <source>
    </source>
</evidence>
<gene>
    <name evidence="6" type="primary">Adh5</name>
    <name type="synonym">Adh-2</name>
    <name type="synonym">Adh2</name>
</gene>
<feature type="initiator methionine" description="Removed" evidence="1">
    <location>
        <position position="1"/>
    </location>
</feature>
<feature type="chain" id="PRO_0000160760" description="Alcohol dehydrogenase class-3">
    <location>
        <begin position="2"/>
        <end position="374"/>
    </location>
</feature>
<feature type="binding site" evidence="1">
    <location>
        <position position="45"/>
    </location>
    <ligand>
        <name>Zn(2+)</name>
        <dbReference type="ChEBI" id="CHEBI:29105"/>
        <label>1</label>
        <note>catalytic</note>
    </ligand>
</feature>
<feature type="binding site" evidence="1">
    <location>
        <position position="67"/>
    </location>
    <ligand>
        <name>Zn(2+)</name>
        <dbReference type="ChEBI" id="CHEBI:29105"/>
        <label>1</label>
        <note>catalytic</note>
    </ligand>
</feature>
<feature type="binding site" evidence="1">
    <location>
        <position position="97"/>
    </location>
    <ligand>
        <name>Zn(2+)</name>
        <dbReference type="ChEBI" id="CHEBI:29105"/>
        <label>2</label>
    </ligand>
</feature>
<feature type="binding site" evidence="1">
    <location>
        <position position="100"/>
    </location>
    <ligand>
        <name>Zn(2+)</name>
        <dbReference type="ChEBI" id="CHEBI:29105"/>
        <label>2</label>
    </ligand>
</feature>
<feature type="binding site" evidence="1">
    <location>
        <position position="103"/>
    </location>
    <ligand>
        <name>Zn(2+)</name>
        <dbReference type="ChEBI" id="CHEBI:29105"/>
        <label>2</label>
    </ligand>
</feature>
<feature type="binding site" evidence="1">
    <location>
        <position position="111"/>
    </location>
    <ligand>
        <name>Zn(2+)</name>
        <dbReference type="ChEBI" id="CHEBI:29105"/>
        <label>2</label>
    </ligand>
</feature>
<feature type="binding site" evidence="1">
    <location>
        <position position="174"/>
    </location>
    <ligand>
        <name>Zn(2+)</name>
        <dbReference type="ChEBI" id="CHEBI:29105"/>
        <label>1</label>
        <note>catalytic</note>
    </ligand>
</feature>
<feature type="site" description="Important for FDH activity and activation by fatty acids" evidence="1">
    <location>
        <position position="115"/>
    </location>
</feature>
<feature type="modified residue" description="N-acetylalanine" evidence="1">
    <location>
        <position position="2"/>
    </location>
</feature>
<feature type="modified residue" description="N6-succinyllysine" evidence="9">
    <location>
        <position position="233"/>
    </location>
</feature>
<feature type="modified residue" description="Phosphoserine" evidence="7 8">
    <location>
        <position position="247"/>
    </location>
</feature>
<feature type="modified residue" description="N6-succinyllysine" evidence="9">
    <location>
        <position position="315"/>
    </location>
</feature>
<feature type="modified residue" description="Phosphoserine" evidence="1">
    <location>
        <position position="324"/>
    </location>
</feature>
<feature type="modified residue" description="Phosphoserine" evidence="1">
    <location>
        <position position="351"/>
    </location>
</feature>
<feature type="sequence conflict" description="In Ref. 1; no nucleotide entry, 2; AAA68896 and 3; AAC52763." evidence="5" ref="1 2 3">
    <original>A</original>
    <variation>R</variation>
    <location>
        <position position="55"/>
    </location>
</feature>
<feature type="sequence conflict" description="In Ref. 4; BAE35383." evidence="5" ref="4">
    <original>K</original>
    <variation>R</variation>
    <location>
        <position position="133"/>
    </location>
</feature>
<feature type="sequence conflict" description="In Ref. 4; BAE35383." evidence="5" ref="4">
    <original>A</original>
    <variation>T</variation>
    <location>
        <position position="183"/>
    </location>
</feature>
<feature type="sequence conflict" description="In Ref. 4; BAE35383." evidence="5" ref="4">
    <original>V</original>
    <variation>I</variation>
    <location>
        <position position="253"/>
    </location>
</feature>